<organism>
    <name type="scientific">Saccharomyces cerevisiae (strain ATCC 204508 / S288c)</name>
    <name type="common">Baker's yeast</name>
    <dbReference type="NCBI Taxonomy" id="559292"/>
    <lineage>
        <taxon>Eukaryota</taxon>
        <taxon>Fungi</taxon>
        <taxon>Dikarya</taxon>
        <taxon>Ascomycota</taxon>
        <taxon>Saccharomycotina</taxon>
        <taxon>Saccharomycetes</taxon>
        <taxon>Saccharomycetales</taxon>
        <taxon>Saccharomycetaceae</taxon>
        <taxon>Saccharomyces</taxon>
    </lineage>
</organism>
<name>TPA1_YEAST</name>
<accession>P40032</accession>
<accession>D3DLV1</accession>
<feature type="chain" id="PRO_0000206670" description="Prolyl 3,4-dihydroxylase TPA1">
    <location>
        <begin position="1"/>
        <end position="644"/>
    </location>
</feature>
<feature type="domain" description="Fe2OG dioxygenase" evidence="1">
    <location>
        <begin position="141"/>
        <end position="247"/>
    </location>
</feature>
<feature type="binding site" evidence="1 5 9">
    <location>
        <position position="159"/>
    </location>
    <ligand>
        <name>Fe cation</name>
        <dbReference type="ChEBI" id="CHEBI:24875"/>
    </ligand>
</feature>
<feature type="binding site" evidence="1 5 9">
    <location>
        <position position="161"/>
    </location>
    <ligand>
        <name>Fe cation</name>
        <dbReference type="ChEBI" id="CHEBI:24875"/>
    </ligand>
</feature>
<feature type="binding site" evidence="5">
    <location>
        <position position="173"/>
    </location>
    <ligand>
        <name>2-oxoglutarate</name>
        <dbReference type="ChEBI" id="CHEBI:16810"/>
    </ligand>
</feature>
<feature type="binding site" evidence="1 5 9">
    <location>
        <position position="227"/>
    </location>
    <ligand>
        <name>Fe cation</name>
        <dbReference type="ChEBI" id="CHEBI:24875"/>
    </ligand>
</feature>
<feature type="binding site" evidence="1 5">
    <location>
        <position position="238"/>
    </location>
    <ligand>
        <name>2-oxoglutarate</name>
        <dbReference type="ChEBI" id="CHEBI:16810"/>
    </ligand>
</feature>
<feature type="modified residue" description="Phosphoserine" evidence="15">
    <location>
        <position position="607"/>
    </location>
</feature>
<feature type="mutagenesis site" description="Loss of function." evidence="7 8">
    <original>HDD</original>
    <variation>ADN</variation>
    <variation>ADA</variation>
    <location>
        <begin position="159"/>
        <end position="161"/>
    </location>
</feature>
<feature type="mutagenesis site" description="Loss of function.">
    <original>H</original>
    <variation>A</variation>
    <location>
        <position position="159"/>
    </location>
</feature>
<feature type="helix" evidence="18">
    <location>
        <begin position="27"/>
        <end position="29"/>
    </location>
</feature>
<feature type="helix" evidence="18">
    <location>
        <begin position="32"/>
        <end position="35"/>
    </location>
</feature>
<feature type="helix" evidence="18">
    <location>
        <begin position="37"/>
        <end position="48"/>
    </location>
</feature>
<feature type="strand" evidence="18">
    <location>
        <begin position="51"/>
        <end position="53"/>
    </location>
</feature>
<feature type="strand" evidence="18">
    <location>
        <begin position="56"/>
        <end position="60"/>
    </location>
</feature>
<feature type="helix" evidence="18">
    <location>
        <begin position="64"/>
        <end position="77"/>
    </location>
</feature>
<feature type="strand" evidence="18">
    <location>
        <begin position="81"/>
        <end position="84"/>
    </location>
</feature>
<feature type="strand" evidence="18">
    <location>
        <begin position="86"/>
        <end position="92"/>
    </location>
</feature>
<feature type="helix" evidence="18">
    <location>
        <begin position="111"/>
        <end position="120"/>
    </location>
</feature>
<feature type="helix" evidence="18">
    <location>
        <begin position="123"/>
        <end position="132"/>
    </location>
</feature>
<feature type="strand" evidence="19">
    <location>
        <begin position="139"/>
        <end position="142"/>
    </location>
</feature>
<feature type="strand" evidence="18">
    <location>
        <begin position="145"/>
        <end position="150"/>
    </location>
</feature>
<feature type="strand" evidence="18">
    <location>
        <begin position="155"/>
        <end position="159"/>
    </location>
</feature>
<feature type="strand" evidence="18">
    <location>
        <begin position="166"/>
        <end position="173"/>
    </location>
</feature>
<feature type="helix" evidence="18">
    <location>
        <begin position="183"/>
        <end position="185"/>
    </location>
</feature>
<feature type="strand" evidence="18">
    <location>
        <begin position="189"/>
        <end position="191"/>
    </location>
</feature>
<feature type="strand" evidence="18">
    <location>
        <begin position="194"/>
        <end position="196"/>
    </location>
</feature>
<feature type="strand" evidence="18">
    <location>
        <begin position="205"/>
        <end position="208"/>
    </location>
</feature>
<feature type="strand" evidence="18">
    <location>
        <begin position="214"/>
        <end position="219"/>
    </location>
</feature>
<feature type="turn" evidence="18">
    <location>
        <begin position="222"/>
        <end position="224"/>
    </location>
</feature>
<feature type="strand" evidence="18">
    <location>
        <begin position="227"/>
        <end position="229"/>
    </location>
</feature>
<feature type="strand" evidence="18">
    <location>
        <begin position="238"/>
        <end position="246"/>
    </location>
</feature>
<feature type="helix" evidence="20">
    <location>
        <begin position="252"/>
        <end position="254"/>
    </location>
</feature>
<feature type="helix" evidence="18">
    <location>
        <begin position="259"/>
        <end position="268"/>
    </location>
</feature>
<feature type="helix" evidence="17">
    <location>
        <begin position="269"/>
        <end position="277"/>
    </location>
</feature>
<feature type="helix" evidence="18">
    <location>
        <begin position="278"/>
        <end position="282"/>
    </location>
</feature>
<feature type="helix" evidence="18">
    <location>
        <begin position="294"/>
        <end position="304"/>
    </location>
</feature>
<feature type="helix" evidence="18">
    <location>
        <begin position="332"/>
        <end position="339"/>
    </location>
</feature>
<feature type="helix" evidence="18">
    <location>
        <begin position="344"/>
        <end position="346"/>
    </location>
</feature>
<feature type="helix" evidence="18">
    <location>
        <begin position="349"/>
        <end position="362"/>
    </location>
</feature>
<feature type="strand" evidence="18">
    <location>
        <begin position="363"/>
        <end position="369"/>
    </location>
</feature>
<feature type="helix" evidence="18">
    <location>
        <begin position="373"/>
        <end position="389"/>
    </location>
</feature>
<feature type="helix" evidence="18">
    <location>
        <begin position="396"/>
        <end position="398"/>
    </location>
</feature>
<feature type="turn" evidence="18">
    <location>
        <begin position="409"/>
        <end position="411"/>
    </location>
</feature>
<feature type="strand" evidence="18">
    <location>
        <begin position="415"/>
        <end position="417"/>
    </location>
</feature>
<feature type="strand" evidence="16">
    <location>
        <begin position="419"/>
        <end position="421"/>
    </location>
</feature>
<feature type="helix" evidence="18">
    <location>
        <begin position="428"/>
        <end position="436"/>
    </location>
</feature>
<feature type="helix" evidence="18">
    <location>
        <begin position="443"/>
        <end position="457"/>
    </location>
</feature>
<feature type="turn" evidence="18">
    <location>
        <begin position="461"/>
        <end position="463"/>
    </location>
</feature>
<feature type="helix" evidence="18">
    <location>
        <begin position="466"/>
        <end position="479"/>
    </location>
</feature>
<feature type="helix" evidence="18">
    <location>
        <begin position="481"/>
        <end position="491"/>
    </location>
</feature>
<feature type="strand" evidence="18">
    <location>
        <begin position="492"/>
        <end position="495"/>
    </location>
</feature>
<feature type="strand" evidence="18">
    <location>
        <begin position="497"/>
        <end position="505"/>
    </location>
</feature>
<feature type="turn" evidence="18">
    <location>
        <begin position="507"/>
        <end position="509"/>
    </location>
</feature>
<feature type="helix" evidence="18">
    <location>
        <begin position="521"/>
        <end position="523"/>
    </location>
</feature>
<feature type="strand" evidence="18">
    <location>
        <begin position="527"/>
        <end position="540"/>
    </location>
</feature>
<feature type="turn" evidence="18">
    <location>
        <begin position="546"/>
        <end position="550"/>
    </location>
</feature>
<feature type="strand" evidence="18">
    <location>
        <begin position="555"/>
        <end position="558"/>
    </location>
</feature>
<feature type="strand" evidence="18">
    <location>
        <begin position="588"/>
        <end position="592"/>
    </location>
</feature>
<feature type="strand" evidence="18">
    <location>
        <begin position="596"/>
        <end position="604"/>
    </location>
</feature>
<feature type="strand" evidence="18">
    <location>
        <begin position="609"/>
        <end position="612"/>
    </location>
</feature>
<feature type="strand" evidence="18">
    <location>
        <begin position="623"/>
        <end position="634"/>
    </location>
</feature>
<comment type="function">
    <text evidence="4 7 8">Prolyl 3,4-dihydroxylase that catalyzes 3,4-dihydroxylation of 'Pro-64' of small ribosomal subunit uS12 (RPS23A and RPS23B), thereby regulating protein translation termination efficiency. Part of a messenger ribonucleoprotein (mRNP) complex at the 3'-UTR of mRNAs. It associates specifically with components of the translation termination complex and is involved in both translation termination and in regulation of normal mRNA decay through translation termination-coupled poly(A) shortening.</text>
</comment>
<comment type="catalytic activity">
    <reaction evidence="8 13">
        <text>[ribosomal protein uS12]-L-proline + 2-oxoglutarate + O2 = [ribosomal protein uS12]-(3S)-3-hydroxy-L-proline + succinate + CO2</text>
        <dbReference type="Rhea" id="RHEA:54156"/>
        <dbReference type="Rhea" id="RHEA-COMP:13816"/>
        <dbReference type="Rhea" id="RHEA-COMP:13818"/>
        <dbReference type="ChEBI" id="CHEBI:15379"/>
        <dbReference type="ChEBI" id="CHEBI:16526"/>
        <dbReference type="ChEBI" id="CHEBI:16810"/>
        <dbReference type="ChEBI" id="CHEBI:30031"/>
        <dbReference type="ChEBI" id="CHEBI:50342"/>
        <dbReference type="ChEBI" id="CHEBI:85428"/>
    </reaction>
</comment>
<comment type="catalytic activity">
    <reaction evidence="8 13">
        <text>[ribosomal protein uS12]-(3S)-3-hydroxy-L-proline + 2-oxoglutarate + O2 = [ribosomal protein uS12]-(3S)-3,4-dihydroxy-L-proline + succinate + CO2</text>
        <dbReference type="Rhea" id="RHEA:54160"/>
        <dbReference type="Rhea" id="RHEA-COMP:13817"/>
        <dbReference type="Rhea" id="RHEA-COMP:13818"/>
        <dbReference type="ChEBI" id="CHEBI:15379"/>
        <dbReference type="ChEBI" id="CHEBI:16526"/>
        <dbReference type="ChEBI" id="CHEBI:16810"/>
        <dbReference type="ChEBI" id="CHEBI:30031"/>
        <dbReference type="ChEBI" id="CHEBI:85428"/>
        <dbReference type="ChEBI" id="CHEBI:138052"/>
    </reaction>
</comment>
<comment type="cofactor">
    <cofactor evidence="5">
        <name>Fe(2+)</name>
        <dbReference type="ChEBI" id="CHEBI:29033"/>
    </cofactor>
    <text evidence="5">Binds 1 Fe(2+) ion per subunit.</text>
</comment>
<comment type="cofactor">
    <cofactor evidence="12">
        <name>L-ascorbate</name>
        <dbReference type="ChEBI" id="CHEBI:38290"/>
    </cofactor>
</comment>
<comment type="subunit">
    <text evidence="4 5 6 7">Monomer and homodimer (PubMed:20040577, PubMed:20630870). Interacts with FRK1, eRF1 (SUP1), eRF3 (SUP35) and polyadenylate-binding protein PAB1. Interacts with ETT1 (PubMed:16809762, PubMed:20489023).</text>
</comment>
<comment type="subcellular location">
    <subcellularLocation>
        <location evidence="2">Nucleus</location>
    </subcellularLocation>
</comment>
<comment type="disruption phenotype">
    <text evidence="7">Decrease of translation termination efficacy and an increase in mRNAs half-lives and longer mRNA poly(A) tails.</text>
</comment>
<comment type="miscellaneous">
    <text evidence="3">Present with 8910 molecules/cell in log phase SD medium.</text>
</comment>
<comment type="similarity">
    <text evidence="12">Belongs to the TPA1 family.</text>
</comment>
<sequence length="644" mass="74041">MKRKTAEVKGEKERNSKQISLEEDKIKGMFNPKIWDKTFQDGLKKEIEDSQPYNWGTIHELVNDDLLRAVRKEIETEIHFTKKETDIYRVNQSGDLANLSGLDWDDLSRLPNLFKLRQILYSKQYRDFFGYVTKAGKLSGSKTDMSINTYTKGCHLLTHDDVIGSRRISFILYLPDPDRKWKSHYGGGLRLFPSILPNVPHSDPSAKLVPQFNQIAFFKVLPGFSFHDVEEVKVDKHRLSIQGWYHIPQVGEEGYIPGEEEAWVRNNTSTLAQIESNVLEDFEFPKDERNILSFHEVKHFEKMLKGDAGAKTDNTPKESMTSVISDSVKLSEAEFTYLSQYISPEHLSSKGIEKLQKQFVENSSLQIESFLNDDKSELLKKVIKQKELEQECPYHSKDVKAPWKTAIPPHKARYLYIDGKEYRNFQTEADILEALNNNDLPNFQFTKDAIKIISDASGNSRENNFDAELALIDLAVFHKSTIFKKYLALLTSLCPVSEQILIRRFRPGMDFTLATKCRFNELLKSNPDIIDAVLEGTLCLTPSAGWESGELGGYELYMMDDDEDNKQYLKEDVEDASVYRADDSGDSVLINDPPAWNTFNLVLRDESVLEFVKYVSWSAKSSRWDVKMKWDVKSCDEDGQEDEA</sequence>
<gene>
    <name evidence="10" type="primary">TPA1</name>
    <name evidence="14" type="ordered locus">YER049W</name>
</gene>
<proteinExistence type="evidence at protein level"/>
<dbReference type="EC" id="1.14.11.-" evidence="8"/>
<dbReference type="EMBL" id="U18796">
    <property type="protein sequence ID" value="AAB64584.1"/>
    <property type="molecule type" value="Genomic_DNA"/>
</dbReference>
<dbReference type="EMBL" id="BK006939">
    <property type="protein sequence ID" value="DAA07705.1"/>
    <property type="molecule type" value="Genomic_DNA"/>
</dbReference>
<dbReference type="PIR" id="S50552">
    <property type="entry name" value="S50552"/>
</dbReference>
<dbReference type="RefSeq" id="NP_010969.1">
    <property type="nucleotide sequence ID" value="NM_001178940.1"/>
</dbReference>
<dbReference type="PDB" id="3KT1">
    <property type="method" value="X-ray"/>
    <property type="resolution" value="2.50 A"/>
    <property type="chains" value="A=21-644"/>
</dbReference>
<dbReference type="PDB" id="3KT4">
    <property type="method" value="X-ray"/>
    <property type="resolution" value="2.73 A"/>
    <property type="chains" value="A=21-644"/>
</dbReference>
<dbReference type="PDB" id="3KT7">
    <property type="method" value="X-ray"/>
    <property type="resolution" value="1.77 A"/>
    <property type="chains" value="A=21-644"/>
</dbReference>
<dbReference type="PDB" id="3MGU">
    <property type="method" value="X-ray"/>
    <property type="resolution" value="2.80 A"/>
    <property type="chains" value="A=1-644"/>
</dbReference>
<dbReference type="PDB" id="4NHK">
    <property type="method" value="X-ray"/>
    <property type="resolution" value="1.90 A"/>
    <property type="chains" value="A=21-644"/>
</dbReference>
<dbReference type="PDB" id="4NHL">
    <property type="method" value="X-ray"/>
    <property type="resolution" value="2.84 A"/>
    <property type="chains" value="A=21-644"/>
</dbReference>
<dbReference type="PDB" id="4NHM">
    <property type="method" value="X-ray"/>
    <property type="resolution" value="1.90 A"/>
    <property type="chains" value="A=21-644"/>
</dbReference>
<dbReference type="PDBsum" id="3KT1"/>
<dbReference type="PDBsum" id="3KT4"/>
<dbReference type="PDBsum" id="3KT7"/>
<dbReference type="PDBsum" id="3MGU"/>
<dbReference type="PDBsum" id="4NHK"/>
<dbReference type="PDBsum" id="4NHL"/>
<dbReference type="PDBsum" id="4NHM"/>
<dbReference type="SMR" id="P40032"/>
<dbReference type="BioGRID" id="36788">
    <property type="interactions" value="116"/>
</dbReference>
<dbReference type="DIP" id="DIP-2878N"/>
<dbReference type="FunCoup" id="P40032">
    <property type="interactions" value="491"/>
</dbReference>
<dbReference type="IntAct" id="P40032">
    <property type="interactions" value="7"/>
</dbReference>
<dbReference type="MINT" id="P40032"/>
<dbReference type="STRING" id="4932.YER049W"/>
<dbReference type="iPTMnet" id="P40032"/>
<dbReference type="PaxDb" id="4932-YER049W"/>
<dbReference type="PeptideAtlas" id="P40032"/>
<dbReference type="EnsemblFungi" id="YER049W_mRNA">
    <property type="protein sequence ID" value="YER049W"/>
    <property type="gene ID" value="YER049W"/>
</dbReference>
<dbReference type="GeneID" id="856775"/>
<dbReference type="KEGG" id="sce:YER049W"/>
<dbReference type="AGR" id="SGD:S000000851"/>
<dbReference type="SGD" id="S000000851">
    <property type="gene designation" value="TPA1"/>
</dbReference>
<dbReference type="VEuPathDB" id="FungiDB:YER049W"/>
<dbReference type="eggNOG" id="KOG3844">
    <property type="taxonomic scope" value="Eukaryota"/>
</dbReference>
<dbReference type="GeneTree" id="ENSGT00390000002349"/>
<dbReference type="HOGENOM" id="CLU_017005_0_0_1"/>
<dbReference type="InParanoid" id="P40032"/>
<dbReference type="OMA" id="GWYHIPQ"/>
<dbReference type="OrthoDB" id="430522at2759"/>
<dbReference type="BioCyc" id="YEAST:G3O-30228-MONOMER"/>
<dbReference type="Reactome" id="R-SCE-9629569">
    <property type="pathway name" value="Protein hydroxylation"/>
</dbReference>
<dbReference type="BioGRID-ORCS" id="856775">
    <property type="hits" value="0 hits in 10 CRISPR screens"/>
</dbReference>
<dbReference type="EvolutionaryTrace" id="P40032"/>
<dbReference type="PRO" id="PR:P40032"/>
<dbReference type="Proteomes" id="UP000002311">
    <property type="component" value="Chromosome V"/>
</dbReference>
<dbReference type="RNAct" id="P40032">
    <property type="molecule type" value="protein"/>
</dbReference>
<dbReference type="GO" id="GO:0005737">
    <property type="term" value="C:cytoplasm"/>
    <property type="evidence" value="ECO:0000318"/>
    <property type="project" value="GO_Central"/>
</dbReference>
<dbReference type="GO" id="GO:0005634">
    <property type="term" value="C:nucleus"/>
    <property type="evidence" value="ECO:0007005"/>
    <property type="project" value="SGD"/>
</dbReference>
<dbReference type="GO" id="GO:0008198">
    <property type="term" value="F:ferrous iron binding"/>
    <property type="evidence" value="ECO:0000315"/>
    <property type="project" value="SGD"/>
</dbReference>
<dbReference type="GO" id="GO:0031418">
    <property type="term" value="F:L-ascorbic acid binding"/>
    <property type="evidence" value="ECO:0007669"/>
    <property type="project" value="UniProtKB-KW"/>
</dbReference>
<dbReference type="GO" id="GO:0031543">
    <property type="term" value="F:peptidyl-proline dioxygenase activity"/>
    <property type="evidence" value="ECO:0000314"/>
    <property type="project" value="UniProtKB"/>
</dbReference>
<dbReference type="GO" id="GO:0008143">
    <property type="term" value="F:poly(A) binding"/>
    <property type="evidence" value="ECO:0000314"/>
    <property type="project" value="SGD"/>
</dbReference>
<dbReference type="GO" id="GO:0000288">
    <property type="term" value="P:nuclear-transcribed mRNA catabolic process, deadenylation-dependent decay"/>
    <property type="evidence" value="ECO:0000315"/>
    <property type="project" value="SGD"/>
</dbReference>
<dbReference type="GO" id="GO:0018188">
    <property type="term" value="P:peptidyl-proline di-hydroxylation"/>
    <property type="evidence" value="ECO:0000314"/>
    <property type="project" value="UniProtKB"/>
</dbReference>
<dbReference type="GO" id="GO:0006450">
    <property type="term" value="P:regulation of translational fidelity"/>
    <property type="evidence" value="ECO:0000315"/>
    <property type="project" value="SGD"/>
</dbReference>
<dbReference type="GO" id="GO:0006449">
    <property type="term" value="P:regulation of translational termination"/>
    <property type="evidence" value="ECO:0000315"/>
    <property type="project" value="UniProtKB"/>
</dbReference>
<dbReference type="GO" id="GO:0006415">
    <property type="term" value="P:translational termination"/>
    <property type="evidence" value="ECO:0000315"/>
    <property type="project" value="SGD"/>
</dbReference>
<dbReference type="FunFam" id="2.60.120.620:FF:000014">
    <property type="entry name" value="Prolyl 3,4-dihydroxylase TPA1"/>
    <property type="match status" value="1"/>
</dbReference>
<dbReference type="FunFam" id="3.60.130.20:FF:000002">
    <property type="entry name" value="Prolyl 3,4-dihydroxylase TPA1"/>
    <property type="match status" value="1"/>
</dbReference>
<dbReference type="Gene3D" id="3.60.130.20">
    <property type="entry name" value="Oxoglutarate/iron-dependent oxygenase, C-terminal degradation domain"/>
    <property type="match status" value="1"/>
</dbReference>
<dbReference type="Gene3D" id="2.60.120.620">
    <property type="entry name" value="q2cbj1_9rhob like domain"/>
    <property type="match status" value="1"/>
</dbReference>
<dbReference type="InterPro" id="IPR005123">
    <property type="entry name" value="Oxoglu/Fe-dep_dioxygenase_dom"/>
</dbReference>
<dbReference type="InterPro" id="IPR019601">
    <property type="entry name" value="Oxoglutarate/Fe-dep_Oase_C"/>
</dbReference>
<dbReference type="InterPro" id="IPR006620">
    <property type="entry name" value="Pro_4_hyd_alph"/>
</dbReference>
<dbReference type="InterPro" id="IPR043044">
    <property type="entry name" value="TPA1/Ofd1_C"/>
</dbReference>
<dbReference type="InterPro" id="IPR039558">
    <property type="entry name" value="TPA1/OFD1_N"/>
</dbReference>
<dbReference type="InterPro" id="IPR051842">
    <property type="entry name" value="uS12_prolyl_hydroxylase"/>
</dbReference>
<dbReference type="PANTHER" id="PTHR12117">
    <property type="entry name" value="HISTONE ACETYLTRANSFERASE COMPLEX"/>
    <property type="match status" value="1"/>
</dbReference>
<dbReference type="PANTHER" id="PTHR12117:SF0">
    <property type="entry name" value="PROLYL 3-HYDROXYLASE OGFOD1"/>
    <property type="match status" value="1"/>
</dbReference>
<dbReference type="Pfam" id="PF13661">
    <property type="entry name" value="2OG-FeII_Oxy_4"/>
    <property type="match status" value="1"/>
</dbReference>
<dbReference type="Pfam" id="PF10637">
    <property type="entry name" value="Ofd1_CTDD"/>
    <property type="match status" value="1"/>
</dbReference>
<dbReference type="SMART" id="SM00702">
    <property type="entry name" value="P4Hc"/>
    <property type="match status" value="1"/>
</dbReference>
<dbReference type="PROSITE" id="PS51471">
    <property type="entry name" value="FE2OG_OXY"/>
    <property type="match status" value="1"/>
</dbReference>
<keyword id="KW-0002">3D-structure</keyword>
<keyword id="KW-0223">Dioxygenase</keyword>
<keyword id="KW-0408">Iron</keyword>
<keyword id="KW-0479">Metal-binding</keyword>
<keyword id="KW-0539">Nucleus</keyword>
<keyword id="KW-0560">Oxidoreductase</keyword>
<keyword id="KW-0597">Phosphoprotein</keyword>
<keyword id="KW-1185">Reference proteome</keyword>
<keyword id="KW-0847">Vitamin C</keyword>
<evidence type="ECO:0000255" key="1">
    <source>
        <dbReference type="PROSITE-ProRule" id="PRU00805"/>
    </source>
</evidence>
<evidence type="ECO:0000269" key="2">
    <source>
    </source>
</evidence>
<evidence type="ECO:0000269" key="3">
    <source>
    </source>
</evidence>
<evidence type="ECO:0000269" key="4">
    <source>
    </source>
</evidence>
<evidence type="ECO:0000269" key="5">
    <source>
    </source>
</evidence>
<evidence type="ECO:0000269" key="6">
    <source>
    </source>
</evidence>
<evidence type="ECO:0000269" key="7">
    <source>
    </source>
</evidence>
<evidence type="ECO:0000269" key="8">
    <source>
    </source>
</evidence>
<evidence type="ECO:0000269" key="9">
    <source>
    </source>
</evidence>
<evidence type="ECO:0000303" key="10">
    <source>
    </source>
</evidence>
<evidence type="ECO:0000303" key="11">
    <source>
    </source>
</evidence>
<evidence type="ECO:0000305" key="12"/>
<evidence type="ECO:0000305" key="13">
    <source>
    </source>
</evidence>
<evidence type="ECO:0000312" key="14">
    <source>
        <dbReference type="SGD" id="S000000851"/>
    </source>
</evidence>
<evidence type="ECO:0007744" key="15">
    <source>
    </source>
</evidence>
<evidence type="ECO:0007829" key="16">
    <source>
        <dbReference type="PDB" id="3KT1"/>
    </source>
</evidence>
<evidence type="ECO:0007829" key="17">
    <source>
        <dbReference type="PDB" id="3KT4"/>
    </source>
</evidence>
<evidence type="ECO:0007829" key="18">
    <source>
        <dbReference type="PDB" id="3KT7"/>
    </source>
</evidence>
<evidence type="ECO:0007829" key="19">
    <source>
        <dbReference type="PDB" id="3MGU"/>
    </source>
</evidence>
<evidence type="ECO:0007829" key="20">
    <source>
        <dbReference type="PDB" id="4NHK"/>
    </source>
</evidence>
<protein>
    <recommendedName>
        <fullName evidence="10">Prolyl 3,4-dihydroxylase TPA1</fullName>
        <ecNumber evidence="8">1.14.11.-</ecNumber>
    </recommendedName>
    <alternativeName>
        <fullName evidence="10">Termination and polyadenylation protein 1</fullName>
    </alternativeName>
    <alternativeName>
        <fullName evidence="11">uS12 prolyl 3,4-dihydroxylase</fullName>
    </alternativeName>
</protein>
<reference key="1">
    <citation type="journal article" date="1997" name="Nature">
        <title>The nucleotide sequence of Saccharomyces cerevisiae chromosome V.</title>
        <authorList>
            <person name="Dietrich F.S."/>
            <person name="Mulligan J.T."/>
            <person name="Hennessy K.M."/>
            <person name="Yelton M.A."/>
            <person name="Allen E."/>
            <person name="Araujo R."/>
            <person name="Aviles E."/>
            <person name="Berno A."/>
            <person name="Brennan T."/>
            <person name="Carpenter J."/>
            <person name="Chen E."/>
            <person name="Cherry J.M."/>
            <person name="Chung E."/>
            <person name="Duncan M."/>
            <person name="Guzman E."/>
            <person name="Hartzell G."/>
            <person name="Hunicke-Smith S."/>
            <person name="Hyman R.W."/>
            <person name="Kayser A."/>
            <person name="Komp C."/>
            <person name="Lashkari D."/>
            <person name="Lew H."/>
            <person name="Lin D."/>
            <person name="Mosedale D."/>
            <person name="Nakahara K."/>
            <person name="Namath A."/>
            <person name="Norgren R."/>
            <person name="Oefner P."/>
            <person name="Oh C."/>
            <person name="Petel F.X."/>
            <person name="Roberts D."/>
            <person name="Sehl P."/>
            <person name="Schramm S."/>
            <person name="Shogren T."/>
            <person name="Smith V."/>
            <person name="Taylor P."/>
            <person name="Wei Y."/>
            <person name="Botstein D."/>
            <person name="Davis R.W."/>
        </authorList>
    </citation>
    <scope>NUCLEOTIDE SEQUENCE [LARGE SCALE GENOMIC DNA]</scope>
    <source>
        <strain>ATCC 204508 / S288c</strain>
    </source>
</reference>
<reference key="2">
    <citation type="journal article" date="2014" name="G3 (Bethesda)">
        <title>The reference genome sequence of Saccharomyces cerevisiae: Then and now.</title>
        <authorList>
            <person name="Engel S.R."/>
            <person name="Dietrich F.S."/>
            <person name="Fisk D.G."/>
            <person name="Binkley G."/>
            <person name="Balakrishnan R."/>
            <person name="Costanzo M.C."/>
            <person name="Dwight S.S."/>
            <person name="Hitz B.C."/>
            <person name="Karra K."/>
            <person name="Nash R.S."/>
            <person name="Weng S."/>
            <person name="Wong E.D."/>
            <person name="Lloyd P."/>
            <person name="Skrzypek M.S."/>
            <person name="Miyasato S.R."/>
            <person name="Simison M."/>
            <person name="Cherry J.M."/>
        </authorList>
    </citation>
    <scope>GENOME REANNOTATION</scope>
    <source>
        <strain>ATCC 204508 / S288c</strain>
    </source>
</reference>
<reference key="3">
    <citation type="journal article" date="2003" name="Nature">
        <title>Global analysis of protein localization in budding yeast.</title>
        <authorList>
            <person name="Huh W.-K."/>
            <person name="Falvo J.V."/>
            <person name="Gerke L.C."/>
            <person name="Carroll A.S."/>
            <person name="Howson R.W."/>
            <person name="Weissman J.S."/>
            <person name="O'Shea E.K."/>
        </authorList>
    </citation>
    <scope>SUBCELLULAR LOCATION [LARGE SCALE ANALYSIS]</scope>
</reference>
<reference key="4">
    <citation type="journal article" date="2003" name="Nature">
        <title>Global analysis of protein expression in yeast.</title>
        <authorList>
            <person name="Ghaemmaghami S."/>
            <person name="Huh W.-K."/>
            <person name="Bower K."/>
            <person name="Howson R.W."/>
            <person name="Belle A."/>
            <person name="Dephoure N."/>
            <person name="O'Shea E.K."/>
            <person name="Weissman J.S."/>
        </authorList>
    </citation>
    <scope>LEVEL OF PROTEIN EXPRESSION [LARGE SCALE ANALYSIS]</scope>
</reference>
<reference key="5">
    <citation type="journal article" date="2006" name="Mol. Cell. Biol.">
        <title>Tpa1p is part of an mRNP complex that influences translation termination, mRNA deadenylation, and mRNA turnover in Saccharomyces cerevisiae.</title>
        <authorList>
            <person name="Keeling K.M."/>
            <person name="Salas-Marco J."/>
            <person name="Osherovich L.Z."/>
            <person name="Bedwell D.M."/>
        </authorList>
    </citation>
    <scope>FUNCTION</scope>
    <scope>INTERACTION WITH PAB1; SUP1 AND SUP35</scope>
</reference>
<reference key="6">
    <citation type="journal article" date="2008" name="Mol. Cell. Proteomics">
        <title>A multidimensional chromatography technology for in-depth phosphoproteome analysis.</title>
        <authorList>
            <person name="Albuquerque C.P."/>
            <person name="Smolka M.B."/>
            <person name="Payne S.H."/>
            <person name="Bafna V."/>
            <person name="Eng J."/>
            <person name="Zhou H."/>
        </authorList>
    </citation>
    <scope>PHOSPHORYLATION [LARGE SCALE ANALYSIS] AT SER-607</scope>
    <scope>IDENTIFICATION BY MASS SPECTROMETRY [LARGE SCALE ANALYSIS]</scope>
</reference>
<reference key="7">
    <citation type="journal article" date="2010" name="Science">
        <title>A global protein kinase and phosphatase interaction network in yeast.</title>
        <authorList>
            <person name="Breitkreutz A."/>
            <person name="Choi H."/>
            <person name="Sharom J.R."/>
            <person name="Boucher L."/>
            <person name="Neduva V."/>
            <person name="Larsen B."/>
            <person name="Lin Z.Y."/>
            <person name="Breitkreutz B.J."/>
            <person name="Stark C."/>
            <person name="Liu G."/>
            <person name="Ahn J."/>
            <person name="Dewar-Darch D."/>
            <person name="Reguly T."/>
            <person name="Tang X."/>
            <person name="Almeida R."/>
            <person name="Qin Z.S."/>
            <person name="Pawson T."/>
            <person name="Gingras A.C."/>
            <person name="Nesvizhskii A.I."/>
            <person name="Tyers M."/>
        </authorList>
    </citation>
    <scope>IDENTIFICATION BY MASS SPECTROMETRY</scope>
    <scope>INTERACTION WITH FRK1</scope>
</reference>
<reference key="8">
    <citation type="journal article" date="2014" name="Proc. Natl. Acad. Sci. U.S.A.">
        <title>Hydroxylation of the eukaryotic ribosomal decoding center affects translational accuracy.</title>
        <authorList>
            <person name="Loenarz C."/>
            <person name="Sekirnik R."/>
            <person name="Thalhammer A."/>
            <person name="Ge W."/>
            <person name="Spivakovsky E."/>
            <person name="Mackeen M.M."/>
            <person name="McDonough M.A."/>
            <person name="Cockman M.E."/>
            <person name="Kessler B.M."/>
            <person name="Ratcliffe P.J."/>
            <person name="Wolf A."/>
            <person name="Schofield C.J."/>
        </authorList>
    </citation>
    <scope>FUNCTION</scope>
    <scope>CATALYTIC ACTIVITY</scope>
    <scope>MUTAGENESIS OF 159-ASP--HIS-161</scope>
</reference>
<reference key="9">
    <citation type="journal article" date="2010" name="J. Biol. Chem.">
        <title>Structural and functional insights into Saccharomyces cerevisiae Tpa1, a putative prolylhydroxylase influencing translation termination and transcription.</title>
        <authorList>
            <person name="Henri J."/>
            <person name="Rispal D."/>
            <person name="Bayart E."/>
            <person name="van Tilbeurgh H."/>
            <person name="Seraphin B."/>
            <person name="Graille M."/>
        </authorList>
    </citation>
    <scope>X-RAY CRYSTALLOGRAPHY (2.80 ANGSTROMS) OF 1-644</scope>
    <scope>FUNCTION</scope>
    <scope>DISRUPTION PHENOTYPE</scope>
    <scope>SUBUNIT</scope>
    <scope>MUTAGENESIS OF 159-ASP--HIS-161</scope>
    <scope>INTERACTION WITH ETT1</scope>
</reference>
<reference key="10">
    <citation type="journal article" date="2010" name="Nucleic Acids Res.">
        <title>Crystal structure of Tpa1 from Saccharomyces cerevisiae, a component of the messenger ribonucleoprotein complex.</title>
        <authorList>
            <person name="Kim H.S."/>
            <person name="Kim H.L."/>
            <person name="Kim K.H."/>
            <person name="Kim D.J."/>
            <person name="Lee S.J."/>
            <person name="Yoon J.Y."/>
            <person name="Yoon H.J."/>
            <person name="Lee H.Y."/>
            <person name="Park S.B."/>
            <person name="Kim S.J."/>
            <person name="Lee J.Y."/>
            <person name="Suh S.W."/>
        </authorList>
    </citation>
    <scope>X-RAY CRYSTALLOGRAPHY (1.77 ANGSTROMS) OF 21-644 IN COMPLEX WITH IRON AND 2-OXOGLUTARATE</scope>
    <scope>SUBUNIT</scope>
</reference>
<reference key="11">
    <citation type="journal article" date="2015" name="Structure">
        <title>Structure of the ribosomal oxygenase OGFOD1 provides insights into the regio- and stereoselectivity of prolyl hydroxylases.</title>
        <authorList>
            <person name="Horita S."/>
            <person name="Scotti J.S."/>
            <person name="Thinnes C."/>
            <person name="Mottaghi-Taromsari Y.S."/>
            <person name="Thalhammer A."/>
            <person name="Ge W."/>
            <person name="Aik W."/>
            <person name="Loenarz C."/>
            <person name="Schofield C.J."/>
            <person name="McDonough M.A."/>
        </authorList>
    </citation>
    <scope>X-RAY CRYSTALLOGRAPHY (1.90 ANGSTROMS) OF 21-644 IN COMPLEX WITH INHIBITORS</scope>
    <scope>SUBUNIT</scope>
</reference>